<gene>
    <name evidence="2" type="primary">adk</name>
    <name type="ordered locus">ECIAI1_0477</name>
</gene>
<keyword id="KW-0007">Acetylation</keyword>
<keyword id="KW-0067">ATP-binding</keyword>
<keyword id="KW-0963">Cytoplasm</keyword>
<keyword id="KW-0418">Kinase</keyword>
<keyword id="KW-0545">Nucleotide biosynthesis</keyword>
<keyword id="KW-0547">Nucleotide-binding</keyword>
<keyword id="KW-0808">Transferase</keyword>
<dbReference type="EC" id="2.7.4.3" evidence="2"/>
<dbReference type="EMBL" id="CU928160">
    <property type="protein sequence ID" value="CAQ97349.1"/>
    <property type="molecule type" value="Genomic_DNA"/>
</dbReference>
<dbReference type="RefSeq" id="WP_001345715.1">
    <property type="nucleotide sequence ID" value="NC_011741.1"/>
</dbReference>
<dbReference type="SMR" id="B7M3W6"/>
<dbReference type="GeneID" id="75203140"/>
<dbReference type="KEGG" id="ecr:ECIAI1_0477"/>
<dbReference type="HOGENOM" id="CLU_032354_1_2_6"/>
<dbReference type="UniPathway" id="UPA00588">
    <property type="reaction ID" value="UER00649"/>
</dbReference>
<dbReference type="GO" id="GO:0005737">
    <property type="term" value="C:cytoplasm"/>
    <property type="evidence" value="ECO:0007669"/>
    <property type="project" value="UniProtKB-SubCell"/>
</dbReference>
<dbReference type="GO" id="GO:0004017">
    <property type="term" value="F:adenylate kinase activity"/>
    <property type="evidence" value="ECO:0007669"/>
    <property type="project" value="UniProtKB-UniRule"/>
</dbReference>
<dbReference type="GO" id="GO:0005524">
    <property type="term" value="F:ATP binding"/>
    <property type="evidence" value="ECO:0007669"/>
    <property type="project" value="UniProtKB-UniRule"/>
</dbReference>
<dbReference type="GO" id="GO:0044209">
    <property type="term" value="P:AMP salvage"/>
    <property type="evidence" value="ECO:0007669"/>
    <property type="project" value="UniProtKB-UniRule"/>
</dbReference>
<dbReference type="CDD" id="cd01428">
    <property type="entry name" value="ADK"/>
    <property type="match status" value="1"/>
</dbReference>
<dbReference type="FunFam" id="3.40.50.300:FF:000106">
    <property type="entry name" value="Adenylate kinase mitochondrial"/>
    <property type="match status" value="1"/>
</dbReference>
<dbReference type="Gene3D" id="3.40.50.300">
    <property type="entry name" value="P-loop containing nucleotide triphosphate hydrolases"/>
    <property type="match status" value="1"/>
</dbReference>
<dbReference type="HAMAP" id="MF_00235">
    <property type="entry name" value="Adenylate_kinase_Adk"/>
    <property type="match status" value="1"/>
</dbReference>
<dbReference type="InterPro" id="IPR006259">
    <property type="entry name" value="Adenyl_kin_sub"/>
</dbReference>
<dbReference type="InterPro" id="IPR000850">
    <property type="entry name" value="Adenylat/UMP-CMP_kin"/>
</dbReference>
<dbReference type="InterPro" id="IPR033690">
    <property type="entry name" value="Adenylat_kinase_CS"/>
</dbReference>
<dbReference type="InterPro" id="IPR007862">
    <property type="entry name" value="Adenylate_kinase_lid-dom"/>
</dbReference>
<dbReference type="InterPro" id="IPR027417">
    <property type="entry name" value="P-loop_NTPase"/>
</dbReference>
<dbReference type="NCBIfam" id="TIGR01351">
    <property type="entry name" value="adk"/>
    <property type="match status" value="1"/>
</dbReference>
<dbReference type="NCBIfam" id="NF001379">
    <property type="entry name" value="PRK00279.1-1"/>
    <property type="match status" value="1"/>
</dbReference>
<dbReference type="NCBIfam" id="NF001380">
    <property type="entry name" value="PRK00279.1-2"/>
    <property type="match status" value="1"/>
</dbReference>
<dbReference type="NCBIfam" id="NF001381">
    <property type="entry name" value="PRK00279.1-3"/>
    <property type="match status" value="1"/>
</dbReference>
<dbReference type="NCBIfam" id="NF011100">
    <property type="entry name" value="PRK14527.1"/>
    <property type="match status" value="1"/>
</dbReference>
<dbReference type="PANTHER" id="PTHR23359">
    <property type="entry name" value="NUCLEOTIDE KINASE"/>
    <property type="match status" value="1"/>
</dbReference>
<dbReference type="Pfam" id="PF00406">
    <property type="entry name" value="ADK"/>
    <property type="match status" value="1"/>
</dbReference>
<dbReference type="Pfam" id="PF05191">
    <property type="entry name" value="ADK_lid"/>
    <property type="match status" value="1"/>
</dbReference>
<dbReference type="PRINTS" id="PR00094">
    <property type="entry name" value="ADENYLTKNASE"/>
</dbReference>
<dbReference type="SUPFAM" id="SSF52540">
    <property type="entry name" value="P-loop containing nucleoside triphosphate hydrolases"/>
    <property type="match status" value="1"/>
</dbReference>
<dbReference type="PROSITE" id="PS00113">
    <property type="entry name" value="ADENYLATE_KINASE"/>
    <property type="match status" value="1"/>
</dbReference>
<proteinExistence type="inferred from homology"/>
<protein>
    <recommendedName>
        <fullName evidence="2">Adenylate kinase</fullName>
        <shortName evidence="2">AK</shortName>
        <ecNumber evidence="2">2.7.4.3</ecNumber>
    </recommendedName>
    <alternativeName>
        <fullName evidence="2">ATP-AMP transphosphorylase</fullName>
    </alternativeName>
    <alternativeName>
        <fullName evidence="2">ATP:AMP phosphotransferase</fullName>
    </alternativeName>
    <alternativeName>
        <fullName evidence="2">Adenylate monophosphate kinase</fullName>
    </alternativeName>
</protein>
<accession>B7M3W6</accession>
<reference key="1">
    <citation type="journal article" date="2009" name="PLoS Genet.">
        <title>Organised genome dynamics in the Escherichia coli species results in highly diverse adaptive paths.</title>
        <authorList>
            <person name="Touchon M."/>
            <person name="Hoede C."/>
            <person name="Tenaillon O."/>
            <person name="Barbe V."/>
            <person name="Baeriswyl S."/>
            <person name="Bidet P."/>
            <person name="Bingen E."/>
            <person name="Bonacorsi S."/>
            <person name="Bouchier C."/>
            <person name="Bouvet O."/>
            <person name="Calteau A."/>
            <person name="Chiapello H."/>
            <person name="Clermont O."/>
            <person name="Cruveiller S."/>
            <person name="Danchin A."/>
            <person name="Diard M."/>
            <person name="Dossat C."/>
            <person name="Karoui M.E."/>
            <person name="Frapy E."/>
            <person name="Garry L."/>
            <person name="Ghigo J.M."/>
            <person name="Gilles A.M."/>
            <person name="Johnson J."/>
            <person name="Le Bouguenec C."/>
            <person name="Lescat M."/>
            <person name="Mangenot S."/>
            <person name="Martinez-Jehanne V."/>
            <person name="Matic I."/>
            <person name="Nassif X."/>
            <person name="Oztas S."/>
            <person name="Petit M.A."/>
            <person name="Pichon C."/>
            <person name="Rouy Z."/>
            <person name="Ruf C.S."/>
            <person name="Schneider D."/>
            <person name="Tourret J."/>
            <person name="Vacherie B."/>
            <person name="Vallenet D."/>
            <person name="Medigue C."/>
            <person name="Rocha E.P.C."/>
            <person name="Denamur E."/>
        </authorList>
    </citation>
    <scope>NUCLEOTIDE SEQUENCE [LARGE SCALE GENOMIC DNA]</scope>
    <source>
        <strain>IAI1</strain>
    </source>
</reference>
<feature type="chain" id="PRO_1000191147" description="Adenylate kinase">
    <location>
        <begin position="1"/>
        <end position="214"/>
    </location>
</feature>
<feature type="region of interest" description="NMP" evidence="2">
    <location>
        <begin position="30"/>
        <end position="59"/>
    </location>
</feature>
<feature type="region of interest" description="LID">
    <location>
        <begin position="122"/>
        <end position="159"/>
    </location>
</feature>
<feature type="binding site" evidence="2">
    <location>
        <begin position="10"/>
        <end position="15"/>
    </location>
    <ligand>
        <name>ATP</name>
        <dbReference type="ChEBI" id="CHEBI:30616"/>
    </ligand>
</feature>
<feature type="binding site" evidence="2">
    <location>
        <position position="31"/>
    </location>
    <ligand>
        <name>AMP</name>
        <dbReference type="ChEBI" id="CHEBI:456215"/>
    </ligand>
</feature>
<feature type="binding site" evidence="2">
    <location>
        <position position="36"/>
    </location>
    <ligand>
        <name>AMP</name>
        <dbReference type="ChEBI" id="CHEBI:456215"/>
    </ligand>
</feature>
<feature type="binding site" evidence="2">
    <location>
        <begin position="57"/>
        <end position="59"/>
    </location>
    <ligand>
        <name>AMP</name>
        <dbReference type="ChEBI" id="CHEBI:456215"/>
    </ligand>
</feature>
<feature type="binding site" evidence="2">
    <location>
        <begin position="85"/>
        <end position="88"/>
    </location>
    <ligand>
        <name>AMP</name>
        <dbReference type="ChEBI" id="CHEBI:456215"/>
    </ligand>
</feature>
<feature type="binding site" evidence="2">
    <location>
        <position position="92"/>
    </location>
    <ligand>
        <name>AMP</name>
        <dbReference type="ChEBI" id="CHEBI:456215"/>
    </ligand>
</feature>
<feature type="binding site" evidence="2">
    <location>
        <position position="123"/>
    </location>
    <ligand>
        <name>ATP</name>
        <dbReference type="ChEBI" id="CHEBI:30616"/>
    </ligand>
</feature>
<feature type="binding site" evidence="2">
    <location>
        <begin position="132"/>
        <end position="133"/>
    </location>
    <ligand>
        <name>ATP</name>
        <dbReference type="ChEBI" id="CHEBI:30616"/>
    </ligand>
</feature>
<feature type="binding site" evidence="2">
    <location>
        <position position="156"/>
    </location>
    <ligand>
        <name>AMP</name>
        <dbReference type="ChEBI" id="CHEBI:456215"/>
    </ligand>
</feature>
<feature type="binding site" evidence="2">
    <location>
        <position position="167"/>
    </location>
    <ligand>
        <name>AMP</name>
        <dbReference type="ChEBI" id="CHEBI:456215"/>
    </ligand>
</feature>
<feature type="binding site" evidence="2">
    <location>
        <position position="200"/>
    </location>
    <ligand>
        <name>ATP</name>
        <dbReference type="ChEBI" id="CHEBI:30616"/>
    </ligand>
</feature>
<feature type="modified residue" description="N6-acetyllysine" evidence="1">
    <location>
        <position position="192"/>
    </location>
</feature>
<organism>
    <name type="scientific">Escherichia coli O8 (strain IAI1)</name>
    <dbReference type="NCBI Taxonomy" id="585034"/>
    <lineage>
        <taxon>Bacteria</taxon>
        <taxon>Pseudomonadati</taxon>
        <taxon>Pseudomonadota</taxon>
        <taxon>Gammaproteobacteria</taxon>
        <taxon>Enterobacterales</taxon>
        <taxon>Enterobacteriaceae</taxon>
        <taxon>Escherichia</taxon>
    </lineage>
</organism>
<sequence length="214" mass="23567">MRIILLGAPGAGKGTQAQFIMEKYGIPQISTGDMLRAAVKSGSELGKQAKDIMDAGKLVTDELVIALVKERIAQEDCHNGFLLDGFPRTIPQADAMKEAGINVDYVLEFDVPDELIVDRIVGRRVHAPSGRVYHVKFNPPKVEGKDDVTGEELTTRKDDQEETVRKRLVEYHQMTAPLIGYYSKEAEAGNTKYAKVDGTKPVAEVRADLEKILG</sequence>
<name>KAD_ECO8A</name>
<comment type="function">
    <text evidence="2">Catalyzes the reversible transfer of the terminal phosphate group between ATP and AMP. Plays an important role in cellular energy homeostasis and in adenine nucleotide metabolism.</text>
</comment>
<comment type="catalytic activity">
    <reaction evidence="2">
        <text>AMP + ATP = 2 ADP</text>
        <dbReference type="Rhea" id="RHEA:12973"/>
        <dbReference type="ChEBI" id="CHEBI:30616"/>
        <dbReference type="ChEBI" id="CHEBI:456215"/>
        <dbReference type="ChEBI" id="CHEBI:456216"/>
        <dbReference type="EC" id="2.7.4.3"/>
    </reaction>
</comment>
<comment type="pathway">
    <text evidence="2">Purine metabolism; AMP biosynthesis via salvage pathway; AMP from ADP: step 1/1.</text>
</comment>
<comment type="subunit">
    <text evidence="2">Monomer.</text>
</comment>
<comment type="subcellular location">
    <subcellularLocation>
        <location evidence="2">Cytoplasm</location>
    </subcellularLocation>
</comment>
<comment type="domain">
    <text evidence="2">Consists of three domains, a large central CORE domain and two small peripheral domains, NMPbind and LID, which undergo movements during catalysis. The LID domain closes over the site of phosphoryl transfer upon ATP binding. Assembling and dissambling the active center during each catalytic cycle provides an effective means to prevent ATP hydrolysis.</text>
</comment>
<comment type="similarity">
    <text evidence="2">Belongs to the adenylate kinase family.</text>
</comment>
<evidence type="ECO:0000250" key="1"/>
<evidence type="ECO:0000255" key="2">
    <source>
        <dbReference type="HAMAP-Rule" id="MF_00235"/>
    </source>
</evidence>